<proteinExistence type="inferred from homology"/>
<feature type="chain" id="PRO_1000135140" description="1-(5-phosphoribosyl)-5-[(5-phosphoribosylamino)methylideneamino] imidazole-4-carboxamide isomerase">
    <location>
        <begin position="1"/>
        <end position="245"/>
    </location>
</feature>
<feature type="active site" description="Proton acceptor" evidence="1">
    <location>
        <position position="7"/>
    </location>
</feature>
<feature type="active site" description="Proton donor" evidence="1">
    <location>
        <position position="129"/>
    </location>
</feature>
<keyword id="KW-0028">Amino-acid biosynthesis</keyword>
<keyword id="KW-0963">Cytoplasm</keyword>
<keyword id="KW-0368">Histidine biosynthesis</keyword>
<keyword id="KW-0413">Isomerase</keyword>
<keyword id="KW-1185">Reference proteome</keyword>
<organism>
    <name type="scientific">Proteus mirabilis (strain HI4320)</name>
    <dbReference type="NCBI Taxonomy" id="529507"/>
    <lineage>
        <taxon>Bacteria</taxon>
        <taxon>Pseudomonadati</taxon>
        <taxon>Pseudomonadota</taxon>
        <taxon>Gammaproteobacteria</taxon>
        <taxon>Enterobacterales</taxon>
        <taxon>Morganellaceae</taxon>
        <taxon>Proteus</taxon>
    </lineage>
</organism>
<evidence type="ECO:0000255" key="1">
    <source>
        <dbReference type="HAMAP-Rule" id="MF_01014"/>
    </source>
</evidence>
<gene>
    <name evidence="1" type="primary">hisA</name>
    <name type="ordered locus">PMI0660</name>
</gene>
<accession>B4ESZ9</accession>
<protein>
    <recommendedName>
        <fullName evidence="1">1-(5-phosphoribosyl)-5-[(5-phosphoribosylamino)methylideneamino] imidazole-4-carboxamide isomerase</fullName>
        <ecNumber evidence="1">5.3.1.16</ecNumber>
    </recommendedName>
    <alternativeName>
        <fullName evidence="1">Phosphoribosylformimino-5-aminoimidazole carboxamide ribotide isomerase</fullName>
    </alternativeName>
</protein>
<comment type="catalytic activity">
    <reaction evidence="1">
        <text>1-(5-phospho-beta-D-ribosyl)-5-[(5-phospho-beta-D-ribosylamino)methylideneamino]imidazole-4-carboxamide = 5-[(5-phospho-1-deoxy-D-ribulos-1-ylimino)methylamino]-1-(5-phospho-beta-D-ribosyl)imidazole-4-carboxamide</text>
        <dbReference type="Rhea" id="RHEA:15469"/>
        <dbReference type="ChEBI" id="CHEBI:58435"/>
        <dbReference type="ChEBI" id="CHEBI:58525"/>
        <dbReference type="EC" id="5.3.1.16"/>
    </reaction>
</comment>
<comment type="pathway">
    <text evidence="1">Amino-acid biosynthesis; L-histidine biosynthesis; L-histidine from 5-phospho-alpha-D-ribose 1-diphosphate: step 4/9.</text>
</comment>
<comment type="subcellular location">
    <subcellularLocation>
        <location evidence="1">Cytoplasm</location>
    </subcellularLocation>
</comment>
<comment type="similarity">
    <text evidence="1">Belongs to the HisA/HisF family.</text>
</comment>
<reference key="1">
    <citation type="journal article" date="2008" name="J. Bacteriol.">
        <title>Complete genome sequence of uropathogenic Proteus mirabilis, a master of both adherence and motility.</title>
        <authorList>
            <person name="Pearson M.M."/>
            <person name="Sebaihia M."/>
            <person name="Churcher C."/>
            <person name="Quail M.A."/>
            <person name="Seshasayee A.S."/>
            <person name="Luscombe N.M."/>
            <person name="Abdellah Z."/>
            <person name="Arrosmith C."/>
            <person name="Atkin B."/>
            <person name="Chillingworth T."/>
            <person name="Hauser H."/>
            <person name="Jagels K."/>
            <person name="Moule S."/>
            <person name="Mungall K."/>
            <person name="Norbertczak H."/>
            <person name="Rabbinowitsch E."/>
            <person name="Walker D."/>
            <person name="Whithead S."/>
            <person name="Thomson N.R."/>
            <person name="Rather P.N."/>
            <person name="Parkhill J."/>
            <person name="Mobley H.L.T."/>
        </authorList>
    </citation>
    <scope>NUCLEOTIDE SEQUENCE [LARGE SCALE GENOMIC DNA]</scope>
    <source>
        <strain>HI4320</strain>
    </source>
</reference>
<sequence>MIIPALDLIDGKVVRLHQGDYNKQRDYDDDPIRRYQQYQQDGAKLLHLVDLTGAKDPLARQIPLLKQLVACVNVPVQVGGGIRSEEDVKSLLAAGASRVVIGSTAVSQPELVKTWFERYGADAIVLALDVRIDEQGKKWVAVSGWQENSPYTLEEIIALYQPVGLKHVLCTDISRDGTLAGSNVELYKEISQRFPDILFQASGGIGDLQDIAALPGSGVAGIIVGRALLEGKFTLQEAISCWQNA</sequence>
<name>HIS4_PROMH</name>
<dbReference type="EC" id="5.3.1.16" evidence="1"/>
<dbReference type="EMBL" id="AM942759">
    <property type="protein sequence ID" value="CAR41547.1"/>
    <property type="molecule type" value="Genomic_DNA"/>
</dbReference>
<dbReference type="RefSeq" id="WP_004244524.1">
    <property type="nucleotide sequence ID" value="NC_010554.1"/>
</dbReference>
<dbReference type="SMR" id="B4ESZ9"/>
<dbReference type="EnsemblBacteria" id="CAR41547">
    <property type="protein sequence ID" value="CAR41547"/>
    <property type="gene ID" value="PMI0660"/>
</dbReference>
<dbReference type="GeneID" id="6800447"/>
<dbReference type="KEGG" id="pmr:PMI0660"/>
<dbReference type="eggNOG" id="COG0106">
    <property type="taxonomic scope" value="Bacteria"/>
</dbReference>
<dbReference type="HOGENOM" id="CLU_048577_1_2_6"/>
<dbReference type="UniPathway" id="UPA00031">
    <property type="reaction ID" value="UER00009"/>
</dbReference>
<dbReference type="Proteomes" id="UP000008319">
    <property type="component" value="Chromosome"/>
</dbReference>
<dbReference type="GO" id="GO:0005737">
    <property type="term" value="C:cytoplasm"/>
    <property type="evidence" value="ECO:0007669"/>
    <property type="project" value="UniProtKB-SubCell"/>
</dbReference>
<dbReference type="GO" id="GO:0003949">
    <property type="term" value="F:1-(5-phosphoribosyl)-5-[(5-phosphoribosylamino)methylideneamino]imidazole-4-carboxamide isomerase activity"/>
    <property type="evidence" value="ECO:0007669"/>
    <property type="project" value="UniProtKB-UniRule"/>
</dbReference>
<dbReference type="GO" id="GO:0000105">
    <property type="term" value="P:L-histidine biosynthetic process"/>
    <property type="evidence" value="ECO:0007669"/>
    <property type="project" value="UniProtKB-UniRule"/>
</dbReference>
<dbReference type="GO" id="GO:0000162">
    <property type="term" value="P:L-tryptophan biosynthetic process"/>
    <property type="evidence" value="ECO:0007669"/>
    <property type="project" value="TreeGrafter"/>
</dbReference>
<dbReference type="CDD" id="cd04732">
    <property type="entry name" value="HisA"/>
    <property type="match status" value="1"/>
</dbReference>
<dbReference type="FunFam" id="3.20.20.70:FF:000009">
    <property type="entry name" value="1-(5-phosphoribosyl)-5-[(5-phosphoribosylamino)methylideneamino] imidazole-4-carboxamide isomerase"/>
    <property type="match status" value="1"/>
</dbReference>
<dbReference type="Gene3D" id="3.20.20.70">
    <property type="entry name" value="Aldolase class I"/>
    <property type="match status" value="1"/>
</dbReference>
<dbReference type="HAMAP" id="MF_01014">
    <property type="entry name" value="HisA"/>
    <property type="match status" value="1"/>
</dbReference>
<dbReference type="InterPro" id="IPR013785">
    <property type="entry name" value="Aldolase_TIM"/>
</dbReference>
<dbReference type="InterPro" id="IPR006062">
    <property type="entry name" value="His_biosynth"/>
</dbReference>
<dbReference type="InterPro" id="IPR006063">
    <property type="entry name" value="HisA_bact_arch"/>
</dbReference>
<dbReference type="InterPro" id="IPR044524">
    <property type="entry name" value="Isoase_HisA-like"/>
</dbReference>
<dbReference type="InterPro" id="IPR023016">
    <property type="entry name" value="Isoase_HisA-like_bact"/>
</dbReference>
<dbReference type="InterPro" id="IPR011060">
    <property type="entry name" value="RibuloseP-bd_barrel"/>
</dbReference>
<dbReference type="NCBIfam" id="TIGR00007">
    <property type="entry name" value="1-(5-phosphoribosyl)-5-[(5-phosphoribosylamino)methylideneamino]imidazole-4-carboxamide isomerase"/>
    <property type="match status" value="1"/>
</dbReference>
<dbReference type="PANTHER" id="PTHR43090">
    <property type="entry name" value="1-(5-PHOSPHORIBOSYL)-5-[(5-PHOSPHORIBOSYLAMINO)METHYLIDENEAMINO] IMIDAZOLE-4-CARBOXAMIDE ISOMERASE"/>
    <property type="match status" value="1"/>
</dbReference>
<dbReference type="PANTHER" id="PTHR43090:SF2">
    <property type="entry name" value="1-(5-PHOSPHORIBOSYL)-5-[(5-PHOSPHORIBOSYLAMINO)METHYLIDENEAMINO] IMIDAZOLE-4-CARBOXAMIDE ISOMERASE"/>
    <property type="match status" value="1"/>
</dbReference>
<dbReference type="Pfam" id="PF00977">
    <property type="entry name" value="His_biosynth"/>
    <property type="match status" value="1"/>
</dbReference>
<dbReference type="SUPFAM" id="SSF51366">
    <property type="entry name" value="Ribulose-phoshate binding barrel"/>
    <property type="match status" value="1"/>
</dbReference>